<keyword id="KW-0066">ATP synthesis</keyword>
<keyword id="KW-0997">Cell inner membrane</keyword>
<keyword id="KW-1003">Cell membrane</keyword>
<keyword id="KW-0139">CF(1)</keyword>
<keyword id="KW-0375">Hydrogen ion transport</keyword>
<keyword id="KW-0406">Ion transport</keyword>
<keyword id="KW-0472">Membrane</keyword>
<keyword id="KW-1185">Reference proteome</keyword>
<keyword id="KW-0813">Transport</keyword>
<name>ATPD_SHESH</name>
<organism>
    <name type="scientific">Shewanella sediminis (strain HAW-EB3)</name>
    <dbReference type="NCBI Taxonomy" id="425104"/>
    <lineage>
        <taxon>Bacteria</taxon>
        <taxon>Pseudomonadati</taxon>
        <taxon>Pseudomonadota</taxon>
        <taxon>Gammaproteobacteria</taxon>
        <taxon>Alteromonadales</taxon>
        <taxon>Shewanellaceae</taxon>
        <taxon>Shewanella</taxon>
    </lineage>
</organism>
<reference key="1">
    <citation type="submission" date="2007-08" db="EMBL/GenBank/DDBJ databases">
        <title>Complete sequence of Shewanella sediminis HAW-EB3.</title>
        <authorList>
            <consortium name="US DOE Joint Genome Institute"/>
            <person name="Copeland A."/>
            <person name="Lucas S."/>
            <person name="Lapidus A."/>
            <person name="Barry K."/>
            <person name="Glavina del Rio T."/>
            <person name="Dalin E."/>
            <person name="Tice H."/>
            <person name="Pitluck S."/>
            <person name="Chertkov O."/>
            <person name="Brettin T."/>
            <person name="Bruce D."/>
            <person name="Detter J.C."/>
            <person name="Han C."/>
            <person name="Schmutz J."/>
            <person name="Larimer F."/>
            <person name="Land M."/>
            <person name="Hauser L."/>
            <person name="Kyrpides N."/>
            <person name="Kim E."/>
            <person name="Zhao J.-S."/>
            <person name="Richardson P."/>
        </authorList>
    </citation>
    <scope>NUCLEOTIDE SEQUENCE [LARGE SCALE GENOMIC DNA]</scope>
    <source>
        <strain>HAW-EB3</strain>
    </source>
</reference>
<protein>
    <recommendedName>
        <fullName evidence="1">ATP synthase subunit delta</fullName>
    </recommendedName>
    <alternativeName>
        <fullName evidence="1">ATP synthase F(1) sector subunit delta</fullName>
    </alternativeName>
    <alternativeName>
        <fullName evidence="1">F-type ATPase subunit delta</fullName>
        <shortName evidence="1">F-ATPase subunit delta</shortName>
    </alternativeName>
</protein>
<evidence type="ECO:0000255" key="1">
    <source>
        <dbReference type="HAMAP-Rule" id="MF_01416"/>
    </source>
</evidence>
<gene>
    <name evidence="1" type="primary">atpH</name>
    <name type="ordered locus">Ssed_4489</name>
</gene>
<accession>A8G1W8</accession>
<sequence>MAEITTIARPYAKAAFDFAIENNAVDSWAEMLNFAAMVSENETIKPLLAGGLASNKLAELFIGVCGEQVNEQGQNLLKVMAENGRLEVLPAVAQQFVELCNEWAKEIEATVVSAVELTSEQQQDISVSLEKRLARKVKLNCSIDASLVAGVIITAGDLVIDGSVRGKISRLSDTLQS</sequence>
<comment type="function">
    <text evidence="1">F(1)F(0) ATP synthase produces ATP from ADP in the presence of a proton or sodium gradient. F-type ATPases consist of two structural domains, F(1) containing the extramembraneous catalytic core and F(0) containing the membrane proton channel, linked together by a central stalk and a peripheral stalk. During catalysis, ATP synthesis in the catalytic domain of F(1) is coupled via a rotary mechanism of the central stalk subunits to proton translocation.</text>
</comment>
<comment type="function">
    <text evidence="1">This protein is part of the stalk that links CF(0) to CF(1). It either transmits conformational changes from CF(0) to CF(1) or is implicated in proton conduction.</text>
</comment>
<comment type="subunit">
    <text evidence="1">F-type ATPases have 2 components, F(1) - the catalytic core - and F(0) - the membrane proton channel. F(1) has five subunits: alpha(3), beta(3), gamma(1), delta(1), epsilon(1). F(0) has three main subunits: a(1), b(2) and c(10-14). The alpha and beta chains form an alternating ring which encloses part of the gamma chain. F(1) is attached to F(0) by a central stalk formed by the gamma and epsilon chains, while a peripheral stalk is formed by the delta and b chains.</text>
</comment>
<comment type="subcellular location">
    <subcellularLocation>
        <location evidence="1">Cell inner membrane</location>
        <topology evidence="1">Peripheral membrane protein</topology>
    </subcellularLocation>
</comment>
<comment type="similarity">
    <text evidence="1">Belongs to the ATPase delta chain family.</text>
</comment>
<proteinExistence type="inferred from homology"/>
<feature type="chain" id="PRO_1000184794" description="ATP synthase subunit delta">
    <location>
        <begin position="1"/>
        <end position="177"/>
    </location>
</feature>
<dbReference type="EMBL" id="CP000821">
    <property type="protein sequence ID" value="ABV39091.1"/>
    <property type="molecule type" value="Genomic_DNA"/>
</dbReference>
<dbReference type="RefSeq" id="WP_012144818.1">
    <property type="nucleotide sequence ID" value="NC_009831.1"/>
</dbReference>
<dbReference type="SMR" id="A8G1W8"/>
<dbReference type="STRING" id="425104.Ssed_4489"/>
<dbReference type="KEGG" id="sse:Ssed_4489"/>
<dbReference type="eggNOG" id="COG0712">
    <property type="taxonomic scope" value="Bacteria"/>
</dbReference>
<dbReference type="HOGENOM" id="CLU_085114_3_0_6"/>
<dbReference type="OrthoDB" id="9816221at2"/>
<dbReference type="Proteomes" id="UP000002015">
    <property type="component" value="Chromosome"/>
</dbReference>
<dbReference type="GO" id="GO:0005886">
    <property type="term" value="C:plasma membrane"/>
    <property type="evidence" value="ECO:0007669"/>
    <property type="project" value="UniProtKB-SubCell"/>
</dbReference>
<dbReference type="GO" id="GO:0045259">
    <property type="term" value="C:proton-transporting ATP synthase complex"/>
    <property type="evidence" value="ECO:0007669"/>
    <property type="project" value="UniProtKB-KW"/>
</dbReference>
<dbReference type="GO" id="GO:0046933">
    <property type="term" value="F:proton-transporting ATP synthase activity, rotational mechanism"/>
    <property type="evidence" value="ECO:0007669"/>
    <property type="project" value="UniProtKB-UniRule"/>
</dbReference>
<dbReference type="Gene3D" id="1.10.520.20">
    <property type="entry name" value="N-terminal domain of the delta subunit of the F1F0-ATP synthase"/>
    <property type="match status" value="1"/>
</dbReference>
<dbReference type="HAMAP" id="MF_01416">
    <property type="entry name" value="ATP_synth_delta_bact"/>
    <property type="match status" value="1"/>
</dbReference>
<dbReference type="InterPro" id="IPR026015">
    <property type="entry name" value="ATP_synth_OSCP/delta_N_sf"/>
</dbReference>
<dbReference type="InterPro" id="IPR000711">
    <property type="entry name" value="ATPase_OSCP/dsu"/>
</dbReference>
<dbReference type="NCBIfam" id="TIGR01145">
    <property type="entry name" value="ATP_synt_delta"/>
    <property type="match status" value="1"/>
</dbReference>
<dbReference type="NCBIfam" id="NF004402">
    <property type="entry name" value="PRK05758.2-2"/>
    <property type="match status" value="1"/>
</dbReference>
<dbReference type="NCBIfam" id="NF004404">
    <property type="entry name" value="PRK05758.2-5"/>
    <property type="match status" value="1"/>
</dbReference>
<dbReference type="PANTHER" id="PTHR11910">
    <property type="entry name" value="ATP SYNTHASE DELTA CHAIN"/>
    <property type="match status" value="1"/>
</dbReference>
<dbReference type="Pfam" id="PF00213">
    <property type="entry name" value="OSCP"/>
    <property type="match status" value="1"/>
</dbReference>
<dbReference type="PRINTS" id="PR00125">
    <property type="entry name" value="ATPASEDELTA"/>
</dbReference>
<dbReference type="SUPFAM" id="SSF47928">
    <property type="entry name" value="N-terminal domain of the delta subunit of the F1F0-ATP synthase"/>
    <property type="match status" value="1"/>
</dbReference>